<organism>
    <name type="scientific">Verticillium alfalfae (strain VaMs.102 / ATCC MYA-4576 / FGSC 10136)</name>
    <name type="common">Verticillium wilt of alfalfa</name>
    <name type="synonym">Verticillium albo-atrum</name>
    <dbReference type="NCBI Taxonomy" id="526221"/>
    <lineage>
        <taxon>Eukaryota</taxon>
        <taxon>Fungi</taxon>
        <taxon>Dikarya</taxon>
        <taxon>Ascomycota</taxon>
        <taxon>Pezizomycotina</taxon>
        <taxon>Sordariomycetes</taxon>
        <taxon>Hypocreomycetidae</taxon>
        <taxon>Glomerellales</taxon>
        <taxon>Plectosphaerellaceae</taxon>
        <taxon>Verticillium</taxon>
    </lineage>
</organism>
<keyword id="KW-0156">Chromatin regulator</keyword>
<keyword id="KW-0539">Nucleus</keyword>
<keyword id="KW-1185">Reference proteome</keyword>
<keyword id="KW-0677">Repeat</keyword>
<keyword id="KW-0853">WD repeat</keyword>
<accession>C9STX5</accession>
<gene>
    <name type="primary">asa1</name>
    <name type="ORF">VDBG_08396</name>
</gene>
<feature type="chain" id="PRO_0000402223" description="ASTRA-associated protein 1">
    <location>
        <begin position="1"/>
        <end position="404"/>
    </location>
</feature>
<feature type="repeat" description="WD 1">
    <location>
        <begin position="37"/>
        <end position="76"/>
    </location>
</feature>
<feature type="repeat" description="WD 2">
    <location>
        <begin position="79"/>
        <end position="117"/>
    </location>
</feature>
<feature type="repeat" description="WD 3">
    <location>
        <begin position="197"/>
        <end position="238"/>
    </location>
</feature>
<feature type="repeat" description="WD 4">
    <location>
        <begin position="245"/>
        <end position="286"/>
    </location>
</feature>
<feature type="repeat" description="WD 5">
    <location>
        <begin position="294"/>
        <end position="333"/>
    </location>
</feature>
<feature type="repeat" description="WD 6">
    <location>
        <begin position="370"/>
        <end position="404"/>
    </location>
</feature>
<feature type="region of interest" description="Disordered" evidence="2">
    <location>
        <begin position="1"/>
        <end position="31"/>
    </location>
</feature>
<comment type="function">
    <text evidence="1">Component of the ASTRA complex involved in chromatin remodeling.</text>
</comment>
<comment type="subunit">
    <text evidence="1">Component of the ASTRA chromatin remodeling machinery complex.</text>
</comment>
<comment type="subcellular location">
    <subcellularLocation>
        <location evidence="1">Nucleus</location>
    </subcellularLocation>
</comment>
<comment type="similarity">
    <text evidence="3">Belongs to the WD repeat ASA1 family.</text>
</comment>
<protein>
    <recommendedName>
        <fullName>ASTRA-associated protein 1</fullName>
    </recommendedName>
</protein>
<evidence type="ECO:0000250" key="1"/>
<evidence type="ECO:0000256" key="2">
    <source>
        <dbReference type="SAM" id="MobiDB-lite"/>
    </source>
</evidence>
<evidence type="ECO:0000305" key="3"/>
<name>ASA1_VERA1</name>
<sequence>MGITLPSHDRLPRAPCTPTSSARTMPETPHPRTILRGHKAQVHALAFVGNNDRLASGDAEGYVALWDLTIMRPTAVWQPHDNAILGIQGWGADRIITHGRDHKLAVWKLATSDEANLSKKLPLDDTSEPRPQPWLLHLIDVNTMNFCAFAACVPTDPPPAGDDPELLLAVPNTLASESIDIYHLPTQTRRHTVKSPGQNGMVMALALVPQGDSLTLLAGYENGVTTAMHLSAASGTWNTTYRTQPHSQPVLSLDVSPDGLSFVTSSADAVVARHPVPPPAGMEVLEQPLKVVNTKHSGQQSLRFRDDGRVFATGGWDAMVRVYSGKTMKEVAVLKWHEVGCYAVAFASALKAPQAAGGVEERDGTVVRRAGEVSVRERRIAHAEAAHWLAAGSKDGKISLWDIF</sequence>
<dbReference type="EMBL" id="DS985225">
    <property type="protein sequence ID" value="EEY22286.1"/>
    <property type="molecule type" value="Genomic_DNA"/>
</dbReference>
<dbReference type="RefSeq" id="XP_003001351.1">
    <property type="nucleotide sequence ID" value="XM_003001305.1"/>
</dbReference>
<dbReference type="SMR" id="C9STX5"/>
<dbReference type="STRING" id="526221.C9STX5"/>
<dbReference type="GeneID" id="9529400"/>
<dbReference type="KEGG" id="val:VDBG_08396"/>
<dbReference type="eggNOG" id="KOG0322">
    <property type="taxonomic scope" value="Eukaryota"/>
</dbReference>
<dbReference type="HOGENOM" id="CLU_041940_0_1_1"/>
<dbReference type="OMA" id="YQRQSMQ"/>
<dbReference type="OrthoDB" id="7668193at2759"/>
<dbReference type="Proteomes" id="UP000008698">
    <property type="component" value="Unassembled WGS sequence"/>
</dbReference>
<dbReference type="GO" id="GO:0005634">
    <property type="term" value="C:nucleus"/>
    <property type="evidence" value="ECO:0007669"/>
    <property type="project" value="UniProtKB-SubCell"/>
</dbReference>
<dbReference type="GO" id="GO:0006325">
    <property type="term" value="P:chromatin organization"/>
    <property type="evidence" value="ECO:0007669"/>
    <property type="project" value="UniProtKB-KW"/>
</dbReference>
<dbReference type="Gene3D" id="2.130.10.10">
    <property type="entry name" value="YVTN repeat-like/Quinoprotein amine dehydrogenase"/>
    <property type="match status" value="2"/>
</dbReference>
<dbReference type="InterPro" id="IPR015943">
    <property type="entry name" value="WD40/YVTN_repeat-like_dom_sf"/>
</dbReference>
<dbReference type="InterPro" id="IPR019775">
    <property type="entry name" value="WD40_repeat_CS"/>
</dbReference>
<dbReference type="InterPro" id="IPR036322">
    <property type="entry name" value="WD40_repeat_dom_sf"/>
</dbReference>
<dbReference type="InterPro" id="IPR001680">
    <property type="entry name" value="WD40_rpt"/>
</dbReference>
<dbReference type="PANTHER" id="PTHR19854:SF1">
    <property type="entry name" value="GUANINE NUCLEOTIDE-BINDING PROTEIN SUBUNIT BETA-LIKE PROTEIN 1"/>
    <property type="match status" value="1"/>
</dbReference>
<dbReference type="PANTHER" id="PTHR19854">
    <property type="entry name" value="TRANSDUCIN BETA-LIKE 3"/>
    <property type="match status" value="1"/>
</dbReference>
<dbReference type="Pfam" id="PF00400">
    <property type="entry name" value="WD40"/>
    <property type="match status" value="4"/>
</dbReference>
<dbReference type="SMART" id="SM00320">
    <property type="entry name" value="WD40"/>
    <property type="match status" value="5"/>
</dbReference>
<dbReference type="SUPFAM" id="SSF50978">
    <property type="entry name" value="WD40 repeat-like"/>
    <property type="match status" value="1"/>
</dbReference>
<dbReference type="PROSITE" id="PS00678">
    <property type="entry name" value="WD_REPEATS_1"/>
    <property type="match status" value="1"/>
</dbReference>
<dbReference type="PROSITE" id="PS50082">
    <property type="entry name" value="WD_REPEATS_2"/>
    <property type="match status" value="2"/>
</dbReference>
<dbReference type="PROSITE" id="PS50294">
    <property type="entry name" value="WD_REPEATS_REGION"/>
    <property type="match status" value="2"/>
</dbReference>
<proteinExistence type="inferred from homology"/>
<reference key="1">
    <citation type="journal article" date="2011" name="PLoS Pathog.">
        <title>Comparative genomics yields insights into niche adaptation of plant vascular wilt pathogens.</title>
        <authorList>
            <person name="Klosterman S.J."/>
            <person name="Subbarao K.V."/>
            <person name="Kang S."/>
            <person name="Veronese P."/>
            <person name="Gold S.E."/>
            <person name="Thomma B.P.H.J."/>
            <person name="Chen Z."/>
            <person name="Henrissat B."/>
            <person name="Lee Y.-H."/>
            <person name="Park J."/>
            <person name="Garcia-Pedrajas M.D."/>
            <person name="Barbara D.J."/>
            <person name="Anchieta A."/>
            <person name="de Jonge R."/>
            <person name="Santhanam P."/>
            <person name="Maruthachalam K."/>
            <person name="Atallah Z."/>
            <person name="Amyotte S.G."/>
            <person name="Paz Z."/>
            <person name="Inderbitzin P."/>
            <person name="Hayes R.J."/>
            <person name="Heiman D.I."/>
            <person name="Young S."/>
            <person name="Zeng Q."/>
            <person name="Engels R."/>
            <person name="Galagan J."/>
            <person name="Cuomo C.A."/>
            <person name="Dobinson K.F."/>
            <person name="Ma L.-J."/>
        </authorList>
    </citation>
    <scope>NUCLEOTIDE SEQUENCE [LARGE SCALE GENOMIC DNA]</scope>
    <source>
        <strain>VaMs.102 / ATCC MYA-4576 / FGSC 10136</strain>
    </source>
</reference>